<gene>
    <name evidence="1" type="primary">argS</name>
    <name type="ordered locus">SPD_1905</name>
</gene>
<protein>
    <recommendedName>
        <fullName evidence="1">Arginine--tRNA ligase</fullName>
        <ecNumber evidence="1">6.1.1.19</ecNumber>
    </recommendedName>
    <alternativeName>
        <fullName evidence="1">Arginyl-tRNA synthetase</fullName>
        <shortName evidence="1">ArgRS</shortName>
    </alternativeName>
</protein>
<organism>
    <name type="scientific">Streptococcus pneumoniae serotype 2 (strain D39 / NCTC 7466)</name>
    <dbReference type="NCBI Taxonomy" id="373153"/>
    <lineage>
        <taxon>Bacteria</taxon>
        <taxon>Bacillati</taxon>
        <taxon>Bacillota</taxon>
        <taxon>Bacilli</taxon>
        <taxon>Lactobacillales</taxon>
        <taxon>Streptococcaceae</taxon>
        <taxon>Streptococcus</taxon>
    </lineage>
</organism>
<name>SYR_STRP2</name>
<comment type="catalytic activity">
    <reaction evidence="1">
        <text>tRNA(Arg) + L-arginine + ATP = L-arginyl-tRNA(Arg) + AMP + diphosphate</text>
        <dbReference type="Rhea" id="RHEA:20301"/>
        <dbReference type="Rhea" id="RHEA-COMP:9658"/>
        <dbReference type="Rhea" id="RHEA-COMP:9673"/>
        <dbReference type="ChEBI" id="CHEBI:30616"/>
        <dbReference type="ChEBI" id="CHEBI:32682"/>
        <dbReference type="ChEBI" id="CHEBI:33019"/>
        <dbReference type="ChEBI" id="CHEBI:78442"/>
        <dbReference type="ChEBI" id="CHEBI:78513"/>
        <dbReference type="ChEBI" id="CHEBI:456215"/>
        <dbReference type="EC" id="6.1.1.19"/>
    </reaction>
</comment>
<comment type="subunit">
    <text evidence="1">Monomer.</text>
</comment>
<comment type="subcellular location">
    <subcellularLocation>
        <location evidence="1">Cytoplasm</location>
    </subcellularLocation>
</comment>
<comment type="similarity">
    <text evidence="1">Belongs to the class-I aminoacyl-tRNA synthetase family.</text>
</comment>
<keyword id="KW-0030">Aminoacyl-tRNA synthetase</keyword>
<keyword id="KW-0067">ATP-binding</keyword>
<keyword id="KW-0963">Cytoplasm</keyword>
<keyword id="KW-0436">Ligase</keyword>
<keyword id="KW-0547">Nucleotide-binding</keyword>
<keyword id="KW-0648">Protein biosynthesis</keyword>
<keyword id="KW-1185">Reference proteome</keyword>
<sequence length="563" mass="63458">MNTKELIASELSSIIDSLDQEAILKLLETPKNSEMGDIAFPAFSLAKVERKAPQMIAAELAEKMNSQAFEKVVATGPYVNFFLDKSAISAQVLQAVTTEKEHYADQNIGKQENVVIDMSSPNIAKPFSIGHLRSTVIGDSLSHIFQKIGYQTVKVNHLGDWGKQFGMLIVAYKKWGDEEAVKAHPIDELLKLYVRINAEAENDPSLDEEAREWFRKLENGDEEALALWQWFRDESLVEFNRLYNELKVEFDSYNGEAFYNDKMDAVVDILSEKGLLLESEGAQVVNLEKYGIEHPALIKKSDGATLYITRDLAAALYRKNEYQFAKSIYVVGQEQSAHFKQLKAVLQEMGYDWSDDITHVPFGLVTKEGKKLSTRKGNVILLEPTVAEAVSRAKVQIEAKNPELENKDQVAHAVGVGAIKFYDLKTDRTNGYDFDLEAMVSFEGETGPYVQYAYARIQSILRKADFKPETAGNYSLNDTESWEIIKLIQDFPRIINRAADNFEPSIIAKFAISLAQSFNKYYAHTRILDESPERDSRLALSYATAVVLKEALRLLGVEAPEKM</sequence>
<proteinExistence type="inferred from homology"/>
<feature type="chain" id="PRO_1000018127" description="Arginine--tRNA ligase">
    <location>
        <begin position="1"/>
        <end position="563"/>
    </location>
</feature>
<feature type="short sequence motif" description="'HIGH' region">
    <location>
        <begin position="121"/>
        <end position="131"/>
    </location>
</feature>
<evidence type="ECO:0000255" key="1">
    <source>
        <dbReference type="HAMAP-Rule" id="MF_00123"/>
    </source>
</evidence>
<dbReference type="EC" id="6.1.1.19" evidence="1"/>
<dbReference type="EMBL" id="CP000410">
    <property type="protein sequence ID" value="ABJ54835.1"/>
    <property type="molecule type" value="Genomic_DNA"/>
</dbReference>
<dbReference type="RefSeq" id="WP_001092739.1">
    <property type="nucleotide sequence ID" value="NZ_JAMLJR010000012.1"/>
</dbReference>
<dbReference type="SMR" id="Q04I94"/>
<dbReference type="PaxDb" id="373153-SPD_1905"/>
<dbReference type="KEGG" id="spd:SPD_1905"/>
<dbReference type="eggNOG" id="COG0018">
    <property type="taxonomic scope" value="Bacteria"/>
</dbReference>
<dbReference type="HOGENOM" id="CLU_006406_6_1_9"/>
<dbReference type="BioCyc" id="SPNE373153:G1G6V-2050-MONOMER"/>
<dbReference type="Proteomes" id="UP000001452">
    <property type="component" value="Chromosome"/>
</dbReference>
<dbReference type="GO" id="GO:0005737">
    <property type="term" value="C:cytoplasm"/>
    <property type="evidence" value="ECO:0007669"/>
    <property type="project" value="UniProtKB-SubCell"/>
</dbReference>
<dbReference type="GO" id="GO:0004814">
    <property type="term" value="F:arginine-tRNA ligase activity"/>
    <property type="evidence" value="ECO:0007669"/>
    <property type="project" value="UniProtKB-UniRule"/>
</dbReference>
<dbReference type="GO" id="GO:0005524">
    <property type="term" value="F:ATP binding"/>
    <property type="evidence" value="ECO:0007669"/>
    <property type="project" value="UniProtKB-UniRule"/>
</dbReference>
<dbReference type="GO" id="GO:0006420">
    <property type="term" value="P:arginyl-tRNA aminoacylation"/>
    <property type="evidence" value="ECO:0007669"/>
    <property type="project" value="UniProtKB-UniRule"/>
</dbReference>
<dbReference type="CDD" id="cd07956">
    <property type="entry name" value="Anticodon_Ia_Arg"/>
    <property type="match status" value="1"/>
</dbReference>
<dbReference type="CDD" id="cd00671">
    <property type="entry name" value="ArgRS_core"/>
    <property type="match status" value="1"/>
</dbReference>
<dbReference type="FunFam" id="1.10.730.10:FF:000034">
    <property type="entry name" value="Arginine--tRNA ligase"/>
    <property type="match status" value="1"/>
</dbReference>
<dbReference type="FunFam" id="3.30.1360.70:FF:000005">
    <property type="entry name" value="Arginine--tRNA ligase"/>
    <property type="match status" value="1"/>
</dbReference>
<dbReference type="FunFam" id="3.40.50.620:FF:000116">
    <property type="entry name" value="Arginine--tRNA ligase"/>
    <property type="match status" value="1"/>
</dbReference>
<dbReference type="Gene3D" id="3.30.1360.70">
    <property type="entry name" value="Arginyl tRNA synthetase N-terminal domain"/>
    <property type="match status" value="1"/>
</dbReference>
<dbReference type="Gene3D" id="3.40.50.620">
    <property type="entry name" value="HUPs"/>
    <property type="match status" value="1"/>
</dbReference>
<dbReference type="Gene3D" id="1.10.730.10">
    <property type="entry name" value="Isoleucyl-tRNA Synthetase, Domain 1"/>
    <property type="match status" value="1"/>
</dbReference>
<dbReference type="HAMAP" id="MF_00123">
    <property type="entry name" value="Arg_tRNA_synth"/>
    <property type="match status" value="1"/>
</dbReference>
<dbReference type="InterPro" id="IPR001278">
    <property type="entry name" value="Arg-tRNA-ligase"/>
</dbReference>
<dbReference type="InterPro" id="IPR005148">
    <property type="entry name" value="Arg-tRNA-synth_N"/>
</dbReference>
<dbReference type="InterPro" id="IPR036695">
    <property type="entry name" value="Arg-tRNA-synth_N_sf"/>
</dbReference>
<dbReference type="InterPro" id="IPR035684">
    <property type="entry name" value="ArgRS_core"/>
</dbReference>
<dbReference type="InterPro" id="IPR008909">
    <property type="entry name" value="DALR_anticod-bd"/>
</dbReference>
<dbReference type="InterPro" id="IPR014729">
    <property type="entry name" value="Rossmann-like_a/b/a_fold"/>
</dbReference>
<dbReference type="InterPro" id="IPR009080">
    <property type="entry name" value="tRNAsynth_Ia_anticodon-bd"/>
</dbReference>
<dbReference type="NCBIfam" id="TIGR00456">
    <property type="entry name" value="argS"/>
    <property type="match status" value="1"/>
</dbReference>
<dbReference type="PANTHER" id="PTHR11956:SF5">
    <property type="entry name" value="ARGININE--TRNA LIGASE, CYTOPLASMIC"/>
    <property type="match status" value="1"/>
</dbReference>
<dbReference type="PANTHER" id="PTHR11956">
    <property type="entry name" value="ARGINYL-TRNA SYNTHETASE"/>
    <property type="match status" value="1"/>
</dbReference>
<dbReference type="Pfam" id="PF03485">
    <property type="entry name" value="Arg_tRNA_synt_N"/>
    <property type="match status" value="1"/>
</dbReference>
<dbReference type="Pfam" id="PF05746">
    <property type="entry name" value="DALR_1"/>
    <property type="match status" value="1"/>
</dbReference>
<dbReference type="Pfam" id="PF00750">
    <property type="entry name" value="tRNA-synt_1d"/>
    <property type="match status" value="1"/>
</dbReference>
<dbReference type="PRINTS" id="PR01038">
    <property type="entry name" value="TRNASYNTHARG"/>
</dbReference>
<dbReference type="SMART" id="SM01016">
    <property type="entry name" value="Arg_tRNA_synt_N"/>
    <property type="match status" value="1"/>
</dbReference>
<dbReference type="SMART" id="SM00836">
    <property type="entry name" value="DALR_1"/>
    <property type="match status" value="1"/>
</dbReference>
<dbReference type="SUPFAM" id="SSF47323">
    <property type="entry name" value="Anticodon-binding domain of a subclass of class I aminoacyl-tRNA synthetases"/>
    <property type="match status" value="1"/>
</dbReference>
<dbReference type="SUPFAM" id="SSF55190">
    <property type="entry name" value="Arginyl-tRNA synthetase (ArgRS), N-terminal 'additional' domain"/>
    <property type="match status" value="1"/>
</dbReference>
<dbReference type="SUPFAM" id="SSF52374">
    <property type="entry name" value="Nucleotidylyl transferase"/>
    <property type="match status" value="1"/>
</dbReference>
<reference key="1">
    <citation type="journal article" date="2007" name="J. Bacteriol.">
        <title>Genome sequence of Avery's virulent serotype 2 strain D39 of Streptococcus pneumoniae and comparison with that of unencapsulated laboratory strain R6.</title>
        <authorList>
            <person name="Lanie J.A."/>
            <person name="Ng W.-L."/>
            <person name="Kazmierczak K.M."/>
            <person name="Andrzejewski T.M."/>
            <person name="Davidsen T.M."/>
            <person name="Wayne K.J."/>
            <person name="Tettelin H."/>
            <person name="Glass J.I."/>
            <person name="Winkler M.E."/>
        </authorList>
    </citation>
    <scope>NUCLEOTIDE SEQUENCE [LARGE SCALE GENOMIC DNA]</scope>
    <source>
        <strain>D39 / NCTC 7466</strain>
    </source>
</reference>
<accession>Q04I94</accession>